<name>E312_ADE05</name>
<organism>
    <name type="scientific">Human adenovirus C serotype 5</name>
    <name type="common">HAdV-5</name>
    <name type="synonym">Human adenovirus 5</name>
    <dbReference type="NCBI Taxonomy" id="28285"/>
    <lineage>
        <taxon>Viruses</taxon>
        <taxon>Varidnaviria</taxon>
        <taxon>Bamfordvirae</taxon>
        <taxon>Preplasmiviricota</taxon>
        <taxon>Tectiliviricetes</taxon>
        <taxon>Rowavirales</taxon>
        <taxon>Adenoviridae</taxon>
        <taxon>Mastadenovirus</taxon>
        <taxon>Human mastadenovirus C</taxon>
    </lineage>
</organism>
<proteinExistence type="inferred from homology"/>
<sequence>MLSGEAEQLRLKHLVHCRRHKCFARDSGEFCYFELPEDHIEGPAHGVRLTAQGELARSLIREFTQRPLLVERDRGPCVLTVICNCPNLGLHQDLCCHLCAEYNKYRN</sequence>
<evidence type="ECO:0000305" key="1"/>
<keyword id="KW-0244">Early protein</keyword>
<keyword id="KW-1185">Reference proteome</keyword>
<comment type="function">
    <text>Not yet known.</text>
</comment>
<comment type="similarity">
    <text evidence="1">Belongs to the adenoviridae E3A-2 family.</text>
</comment>
<organismHost>
    <name type="scientific">Homo sapiens</name>
    <name type="common">Human</name>
    <dbReference type="NCBI Taxonomy" id="9606"/>
</organismHost>
<protein>
    <recommendedName>
        <fullName>Early E3A 12.5 kDa protein</fullName>
    </recommendedName>
</protein>
<dbReference type="EMBL" id="M73260">
    <property type="status" value="NOT_ANNOTATED_CDS"/>
    <property type="molecule type" value="Genomic_DNA"/>
</dbReference>
<dbReference type="EMBL" id="X03002">
    <property type="protein sequence ID" value="CAA26781.1"/>
    <property type="molecule type" value="Genomic_DNA"/>
</dbReference>
<dbReference type="EMBL" id="AY339865">
    <property type="protein sequence ID" value="AAQ19303.1"/>
    <property type="molecule type" value="Genomic_DNA"/>
</dbReference>
<dbReference type="PIR" id="A05244">
    <property type="entry name" value="ERAD51"/>
</dbReference>
<dbReference type="RefSeq" id="AP_000218.1">
    <property type="nucleotide sequence ID" value="AC_000008.1"/>
</dbReference>
<dbReference type="Proteomes" id="UP000004992">
    <property type="component" value="Genome"/>
</dbReference>
<dbReference type="Proteomes" id="UP000156915">
    <property type="component" value="Segment"/>
</dbReference>
<dbReference type="InterPro" id="IPR007912">
    <property type="entry name" value="Adeno_E3A"/>
</dbReference>
<dbReference type="Pfam" id="PF05248">
    <property type="entry name" value="Adeno_E3A"/>
    <property type="match status" value="1"/>
</dbReference>
<reference key="1">
    <citation type="journal article" date="1985" name="Virology">
        <title>DNA sequence of the early E3 transcription unit of adenovirus 5.</title>
        <authorList>
            <person name="Cladaras C."/>
            <person name="Wold W.S.M."/>
        </authorList>
    </citation>
    <scope>NUCLEOTIDE SEQUENCE [GENOMIC DNA]</scope>
</reference>
<reference key="2">
    <citation type="journal article" date="2003" name="BioProcessing">
        <title>The complete nucleic acid sequence of the adenovirus type 5 reference material (ARM) Genome.</title>
        <authorList>
            <person name="Sugarman B.J."/>
            <person name="Hutchins B.M."/>
            <person name="McAllister D.L."/>
            <person name="Lu F."/>
            <person name="Thomas B.K."/>
        </authorList>
    </citation>
    <scope>NUCLEOTIDE SEQUENCE [GENOMIC DNA]</scope>
</reference>
<reference key="3">
    <citation type="journal article" date="1992" name="Virology">
        <title>The sequence of the genome of adenovirus type 5 and its comparison with the genome of adenovirus type 2.</title>
        <authorList>
            <person name="Chroboczek J."/>
            <person name="Bieber F."/>
            <person name="Jacrot B."/>
        </authorList>
    </citation>
    <scope>NUCLEOTIDE SEQUENCE [LARGE SCALE GENOMIC DNA]</scope>
</reference>
<reference key="4">
    <citation type="journal article" date="1992" name="Virology">
        <title>A 12,500 MW protein is coded by region E3 of adenovirus.</title>
        <authorList>
            <person name="Hawkins L.K."/>
            <person name="Wold W.S.M."/>
        </authorList>
    </citation>
    <scope>IDENTIFICATION OF PROTEIN</scope>
</reference>
<accession>P06496</accession>
<accession>Q6VGU1</accession>
<feature type="chain" id="PRO_0000221743" description="Early E3A 12.5 kDa protein">
    <location>
        <begin position="1"/>
        <end position="107"/>
    </location>
</feature>
<feature type="sequence conflict" description="In Ref. 2; AAQ19303." evidence="1" ref="2">
    <original>L</original>
    <variation>P</variation>
    <location>
        <position position="88"/>
    </location>
</feature>